<keyword id="KW-0963">Cytoplasm</keyword>
<keyword id="KW-0378">Hydrolase</keyword>
<keyword id="KW-0540">Nuclease</keyword>
<keyword id="KW-1185">Reference proteome</keyword>
<keyword id="KW-0690">Ribosome biogenesis</keyword>
<comment type="function">
    <text evidence="1">Could be a nuclease involved in processing of the 5'-end of pre-16S rRNA.</text>
</comment>
<comment type="subcellular location">
    <subcellularLocation>
        <location evidence="1">Cytoplasm</location>
    </subcellularLocation>
</comment>
<comment type="similarity">
    <text evidence="1">Belongs to the YqgF nuclease family.</text>
</comment>
<organism>
    <name type="scientific">Rubrobacter xylanophilus (strain DSM 9941 / JCM 11954 / NBRC 16129 / PRD-1)</name>
    <dbReference type="NCBI Taxonomy" id="266117"/>
    <lineage>
        <taxon>Bacteria</taxon>
        <taxon>Bacillati</taxon>
        <taxon>Actinomycetota</taxon>
        <taxon>Rubrobacteria</taxon>
        <taxon>Rubrobacterales</taxon>
        <taxon>Rubrobacteraceae</taxon>
        <taxon>Rubrobacter</taxon>
    </lineage>
</organism>
<protein>
    <recommendedName>
        <fullName evidence="1">Putative pre-16S rRNA nuclease</fullName>
        <ecNumber evidence="1">3.1.-.-</ecNumber>
    </recommendedName>
</protein>
<dbReference type="EC" id="3.1.-.-" evidence="1"/>
<dbReference type="EMBL" id="CP000386">
    <property type="protein sequence ID" value="ABG04323.1"/>
    <property type="molecule type" value="Genomic_DNA"/>
</dbReference>
<dbReference type="SMR" id="Q1AWA5"/>
<dbReference type="STRING" id="266117.Rxyl_1360"/>
<dbReference type="KEGG" id="rxy:Rxyl_1360"/>
<dbReference type="eggNOG" id="COG0816">
    <property type="taxonomic scope" value="Bacteria"/>
</dbReference>
<dbReference type="HOGENOM" id="CLU_098240_2_1_11"/>
<dbReference type="OrthoDB" id="9790539at2"/>
<dbReference type="Proteomes" id="UP000006637">
    <property type="component" value="Chromosome"/>
</dbReference>
<dbReference type="GO" id="GO:0005829">
    <property type="term" value="C:cytosol"/>
    <property type="evidence" value="ECO:0007669"/>
    <property type="project" value="TreeGrafter"/>
</dbReference>
<dbReference type="GO" id="GO:0004518">
    <property type="term" value="F:nuclease activity"/>
    <property type="evidence" value="ECO:0007669"/>
    <property type="project" value="UniProtKB-KW"/>
</dbReference>
<dbReference type="GO" id="GO:0000967">
    <property type="term" value="P:rRNA 5'-end processing"/>
    <property type="evidence" value="ECO:0007669"/>
    <property type="project" value="UniProtKB-UniRule"/>
</dbReference>
<dbReference type="CDD" id="cd16964">
    <property type="entry name" value="YqgF"/>
    <property type="match status" value="1"/>
</dbReference>
<dbReference type="Gene3D" id="3.30.420.140">
    <property type="entry name" value="YqgF/RNase H-like domain"/>
    <property type="match status" value="1"/>
</dbReference>
<dbReference type="HAMAP" id="MF_00651">
    <property type="entry name" value="Nuclease_YqgF"/>
    <property type="match status" value="1"/>
</dbReference>
<dbReference type="InterPro" id="IPR012337">
    <property type="entry name" value="RNaseH-like_sf"/>
</dbReference>
<dbReference type="InterPro" id="IPR005227">
    <property type="entry name" value="YqgF"/>
</dbReference>
<dbReference type="InterPro" id="IPR006641">
    <property type="entry name" value="YqgF/RNaseH-like_dom"/>
</dbReference>
<dbReference type="InterPro" id="IPR037027">
    <property type="entry name" value="YqgF/RNaseH-like_dom_sf"/>
</dbReference>
<dbReference type="NCBIfam" id="TIGR00250">
    <property type="entry name" value="RNAse_H_YqgF"/>
    <property type="match status" value="1"/>
</dbReference>
<dbReference type="PANTHER" id="PTHR33317">
    <property type="entry name" value="POLYNUCLEOTIDYL TRANSFERASE, RIBONUCLEASE H-LIKE SUPERFAMILY PROTEIN"/>
    <property type="match status" value="1"/>
</dbReference>
<dbReference type="PANTHER" id="PTHR33317:SF4">
    <property type="entry name" value="POLYNUCLEOTIDYL TRANSFERASE, RIBONUCLEASE H-LIKE SUPERFAMILY PROTEIN"/>
    <property type="match status" value="1"/>
</dbReference>
<dbReference type="Pfam" id="PF03652">
    <property type="entry name" value="RuvX"/>
    <property type="match status" value="1"/>
</dbReference>
<dbReference type="SMART" id="SM00732">
    <property type="entry name" value="YqgFc"/>
    <property type="match status" value="1"/>
</dbReference>
<dbReference type="SUPFAM" id="SSF53098">
    <property type="entry name" value="Ribonuclease H-like"/>
    <property type="match status" value="1"/>
</dbReference>
<evidence type="ECO:0000255" key="1">
    <source>
        <dbReference type="HAMAP-Rule" id="MF_00651"/>
    </source>
</evidence>
<accession>Q1AWA5</accession>
<sequence>MSPPEGRVAALDLGEVWTGVAVSDPTRTLARPLEVVRTSELPGVLRRLVREEGVGEVLVGLPRTLRGEVGFQARRVSDRLSSLRAGFPEVRFVEWDERLTTKVVSGPLREGRRRGRRERVDHLAAARMLQEYLELGGGA</sequence>
<name>YQGF_RUBXD</name>
<proteinExistence type="inferred from homology"/>
<gene>
    <name type="ordered locus">Rxyl_1360</name>
</gene>
<reference key="1">
    <citation type="submission" date="2006-06" db="EMBL/GenBank/DDBJ databases">
        <title>Complete sequence of Rubrobacter xylanophilus DSM 9941.</title>
        <authorList>
            <consortium name="US DOE Joint Genome Institute"/>
            <person name="Copeland A."/>
            <person name="Lucas S."/>
            <person name="Lapidus A."/>
            <person name="Barry K."/>
            <person name="Detter J.C."/>
            <person name="Glavina del Rio T."/>
            <person name="Hammon N."/>
            <person name="Israni S."/>
            <person name="Dalin E."/>
            <person name="Tice H."/>
            <person name="Pitluck S."/>
            <person name="Munk A.C."/>
            <person name="Brettin T."/>
            <person name="Bruce D."/>
            <person name="Han C."/>
            <person name="Tapia R."/>
            <person name="Gilna P."/>
            <person name="Schmutz J."/>
            <person name="Larimer F."/>
            <person name="Land M."/>
            <person name="Hauser L."/>
            <person name="Kyrpides N."/>
            <person name="Lykidis A."/>
            <person name="da Costa M.S."/>
            <person name="Rainey F.A."/>
            <person name="Empadinhas N."/>
            <person name="Jolivet E."/>
            <person name="Battista J.R."/>
            <person name="Richardson P."/>
        </authorList>
    </citation>
    <scope>NUCLEOTIDE SEQUENCE [LARGE SCALE GENOMIC DNA]</scope>
    <source>
        <strain>DSM 9941 / JCM 11954 / NBRC 16129 / PRD-1</strain>
    </source>
</reference>
<feature type="chain" id="PRO_0000257584" description="Putative pre-16S rRNA nuclease">
    <location>
        <begin position="1"/>
        <end position="139"/>
    </location>
</feature>